<sequence>MKTFSAKPHEVKRDWYVIDATDKVLGRVASEVARRLRGKHKPEFTPHVDTGDYIIIVNAAKLRVTGTKETDKKYYRHSGYPGGIYETTFGKMQQRFPGRALEKAVKGMLPKGPLGYAMIKKLKVYAEAEHPHEAQQPKALEI</sequence>
<evidence type="ECO:0000255" key="1">
    <source>
        <dbReference type="HAMAP-Rule" id="MF_01366"/>
    </source>
</evidence>
<evidence type="ECO:0000305" key="2"/>
<comment type="function">
    <text evidence="1">This protein is one of the early assembly proteins of the 50S ribosomal subunit, although it is not seen to bind rRNA by itself. It is important during the early stages of 50S assembly.</text>
</comment>
<comment type="subunit">
    <text evidence="1">Part of the 50S ribosomal subunit.</text>
</comment>
<comment type="similarity">
    <text evidence="1">Belongs to the universal ribosomal protein uL13 family.</text>
</comment>
<organism>
    <name type="scientific">Cupriavidus necator (strain ATCC 17699 / DSM 428 / KCTC 22496 / NCIMB 10442 / H16 / Stanier 337)</name>
    <name type="common">Ralstonia eutropha</name>
    <dbReference type="NCBI Taxonomy" id="381666"/>
    <lineage>
        <taxon>Bacteria</taxon>
        <taxon>Pseudomonadati</taxon>
        <taxon>Pseudomonadota</taxon>
        <taxon>Betaproteobacteria</taxon>
        <taxon>Burkholderiales</taxon>
        <taxon>Burkholderiaceae</taxon>
        <taxon>Cupriavidus</taxon>
    </lineage>
</organism>
<reference key="1">
    <citation type="journal article" date="2006" name="Nat. Biotechnol.">
        <title>Genome sequence of the bioplastic-producing 'Knallgas' bacterium Ralstonia eutropha H16.</title>
        <authorList>
            <person name="Pohlmann A."/>
            <person name="Fricke W.F."/>
            <person name="Reinecke F."/>
            <person name="Kusian B."/>
            <person name="Liesegang H."/>
            <person name="Cramm R."/>
            <person name="Eitinger T."/>
            <person name="Ewering C."/>
            <person name="Poetter M."/>
            <person name="Schwartz E."/>
            <person name="Strittmatter A."/>
            <person name="Voss I."/>
            <person name="Gottschalk G."/>
            <person name="Steinbuechel A."/>
            <person name="Friedrich B."/>
            <person name="Bowien B."/>
        </authorList>
    </citation>
    <scope>NUCLEOTIDE SEQUENCE [LARGE SCALE GENOMIC DNA]</scope>
    <source>
        <strain>ATCC 17699 / DSM 428 / KCTC 22496 / NCIMB 10442 / H16 / Stanier 337</strain>
    </source>
</reference>
<gene>
    <name evidence="1" type="primary">rplM</name>
    <name type="ordered locus">H16_A0482</name>
</gene>
<protein>
    <recommendedName>
        <fullName evidence="1">Large ribosomal subunit protein uL13</fullName>
    </recommendedName>
    <alternativeName>
        <fullName evidence="2">50S ribosomal protein L13</fullName>
    </alternativeName>
</protein>
<name>RL13_CUPNH</name>
<accession>Q0KED9</accession>
<proteinExistence type="inferred from homology"/>
<feature type="chain" id="PRO_1000055451" description="Large ribosomal subunit protein uL13">
    <location>
        <begin position="1"/>
        <end position="142"/>
    </location>
</feature>
<dbReference type="EMBL" id="AM260479">
    <property type="protein sequence ID" value="CAJ91632.1"/>
    <property type="molecule type" value="Genomic_DNA"/>
</dbReference>
<dbReference type="RefSeq" id="WP_010813907.1">
    <property type="nucleotide sequence ID" value="NZ_CP039287.1"/>
</dbReference>
<dbReference type="SMR" id="Q0KED9"/>
<dbReference type="STRING" id="381666.H16_A0482"/>
<dbReference type="GeneID" id="34310317"/>
<dbReference type="KEGG" id="reh:H16_A0482"/>
<dbReference type="eggNOG" id="COG0102">
    <property type="taxonomic scope" value="Bacteria"/>
</dbReference>
<dbReference type="HOGENOM" id="CLU_082184_2_2_4"/>
<dbReference type="OrthoDB" id="9801330at2"/>
<dbReference type="Proteomes" id="UP000008210">
    <property type="component" value="Chromosome 1"/>
</dbReference>
<dbReference type="GO" id="GO:0022625">
    <property type="term" value="C:cytosolic large ribosomal subunit"/>
    <property type="evidence" value="ECO:0007669"/>
    <property type="project" value="TreeGrafter"/>
</dbReference>
<dbReference type="GO" id="GO:0003729">
    <property type="term" value="F:mRNA binding"/>
    <property type="evidence" value="ECO:0007669"/>
    <property type="project" value="TreeGrafter"/>
</dbReference>
<dbReference type="GO" id="GO:0003735">
    <property type="term" value="F:structural constituent of ribosome"/>
    <property type="evidence" value="ECO:0007669"/>
    <property type="project" value="InterPro"/>
</dbReference>
<dbReference type="GO" id="GO:0017148">
    <property type="term" value="P:negative regulation of translation"/>
    <property type="evidence" value="ECO:0007669"/>
    <property type="project" value="TreeGrafter"/>
</dbReference>
<dbReference type="GO" id="GO:0006412">
    <property type="term" value="P:translation"/>
    <property type="evidence" value="ECO:0007669"/>
    <property type="project" value="UniProtKB-UniRule"/>
</dbReference>
<dbReference type="CDD" id="cd00392">
    <property type="entry name" value="Ribosomal_L13"/>
    <property type="match status" value="1"/>
</dbReference>
<dbReference type="FunFam" id="3.90.1180.10:FF:000001">
    <property type="entry name" value="50S ribosomal protein L13"/>
    <property type="match status" value="1"/>
</dbReference>
<dbReference type="Gene3D" id="3.90.1180.10">
    <property type="entry name" value="Ribosomal protein L13"/>
    <property type="match status" value="1"/>
</dbReference>
<dbReference type="HAMAP" id="MF_01366">
    <property type="entry name" value="Ribosomal_uL13"/>
    <property type="match status" value="1"/>
</dbReference>
<dbReference type="InterPro" id="IPR005822">
    <property type="entry name" value="Ribosomal_uL13"/>
</dbReference>
<dbReference type="InterPro" id="IPR005823">
    <property type="entry name" value="Ribosomal_uL13_bac-type"/>
</dbReference>
<dbReference type="InterPro" id="IPR036899">
    <property type="entry name" value="Ribosomal_uL13_sf"/>
</dbReference>
<dbReference type="NCBIfam" id="TIGR01066">
    <property type="entry name" value="rplM_bact"/>
    <property type="match status" value="1"/>
</dbReference>
<dbReference type="PANTHER" id="PTHR11545:SF2">
    <property type="entry name" value="LARGE RIBOSOMAL SUBUNIT PROTEIN UL13M"/>
    <property type="match status" value="1"/>
</dbReference>
<dbReference type="PANTHER" id="PTHR11545">
    <property type="entry name" value="RIBOSOMAL PROTEIN L13"/>
    <property type="match status" value="1"/>
</dbReference>
<dbReference type="Pfam" id="PF00572">
    <property type="entry name" value="Ribosomal_L13"/>
    <property type="match status" value="1"/>
</dbReference>
<dbReference type="PIRSF" id="PIRSF002181">
    <property type="entry name" value="Ribosomal_L13"/>
    <property type="match status" value="1"/>
</dbReference>
<dbReference type="SUPFAM" id="SSF52161">
    <property type="entry name" value="Ribosomal protein L13"/>
    <property type="match status" value="1"/>
</dbReference>
<keyword id="KW-1185">Reference proteome</keyword>
<keyword id="KW-0687">Ribonucleoprotein</keyword>
<keyword id="KW-0689">Ribosomal protein</keyword>